<organismHost>
    <name type="scientific">Acanthamoeba polyphaga</name>
    <name type="common">Amoeba</name>
    <dbReference type="NCBI Taxonomy" id="5757"/>
</organismHost>
<proteinExistence type="predicted"/>
<reference key="1">
    <citation type="journal article" date="2004" name="Science">
        <title>The 1.2-megabase genome sequence of Mimivirus.</title>
        <authorList>
            <person name="Raoult D."/>
            <person name="Audic S."/>
            <person name="Robert C."/>
            <person name="Abergel C."/>
            <person name="Renesto P."/>
            <person name="Ogata H."/>
            <person name="La Scola B."/>
            <person name="Susan M."/>
            <person name="Claverie J.-M."/>
        </authorList>
    </citation>
    <scope>NUCLEOTIDE SEQUENCE [LARGE SCALE GENOMIC DNA]</scope>
    <source>
        <strain>Rowbotham-Bradford</strain>
    </source>
</reference>
<keyword id="KW-1185">Reference proteome</keyword>
<sequence>MDNEYKNIDNKLKKEIGKFLTYNYSKNNNVVAIKYLGYVRLLNMNNSIRDLCMESSSKNMNDYNTFNNYVYNKIEELIYFMLDKYKKTEIESAGLRIIQIDKLCEELSLDAKKIVLDNLGIFDENFNYKKENSTAKLKFYLLFLLINHNKSCDKIALFNKMNNILKNFNPQYNVHSDPNVISFCDPNVISFCDTLVYNKLIDNKNLVALIKML</sequence>
<gene>
    <name type="ordered locus">MIMI_R902</name>
</gene>
<accession>Q5UQZ6</accession>
<organism>
    <name type="scientific">Acanthamoeba polyphaga mimivirus</name>
    <name type="common">APMV</name>
    <dbReference type="NCBI Taxonomy" id="212035"/>
    <lineage>
        <taxon>Viruses</taxon>
        <taxon>Varidnaviria</taxon>
        <taxon>Bamfordvirae</taxon>
        <taxon>Nucleocytoviricota</taxon>
        <taxon>Megaviricetes</taxon>
        <taxon>Imitervirales</taxon>
        <taxon>Mimiviridae</taxon>
        <taxon>Megamimivirinae</taxon>
        <taxon>Mimivirus</taxon>
        <taxon>Mimivirus bradfordmassiliense</taxon>
    </lineage>
</organism>
<protein>
    <recommendedName>
        <fullName>Uncharacterized protein R902</fullName>
    </recommendedName>
</protein>
<feature type="chain" id="PRO_0000251131" description="Uncharacterized protein R902">
    <location>
        <begin position="1"/>
        <end position="213"/>
    </location>
</feature>
<name>YR902_MIMIV</name>
<dbReference type="EMBL" id="AY653733">
    <property type="protein sequence ID" value="AAV51159.1"/>
    <property type="molecule type" value="Genomic_DNA"/>
</dbReference>
<dbReference type="KEGG" id="vg:9925571"/>
<dbReference type="Proteomes" id="UP000001134">
    <property type="component" value="Genome"/>
</dbReference>